<protein>
    <recommendedName>
        <fullName>Lysozyme C</fullName>
        <ecNumber>3.2.1.17</ecNumber>
    </recommendedName>
    <alternativeName>
        <fullName>1,4-beta-N-acetylmuramidase C</fullName>
    </alternativeName>
</protein>
<reference key="1">
    <citation type="journal article" date="1997" name="Nature">
        <title>Episodic adaptive evolution of primate lysozymes.</title>
        <authorList>
            <person name="Messier W."/>
            <person name="Stewart C.B."/>
        </authorList>
    </citation>
    <scope>NUCLEOTIDE SEQUENCE [MRNA]</scope>
    <source>
        <tissue>Blood</tissue>
    </source>
</reference>
<evidence type="ECO:0000250" key="1"/>
<evidence type="ECO:0000255" key="2">
    <source>
        <dbReference type="PROSITE-ProRule" id="PRU00680"/>
    </source>
</evidence>
<sequence length="148" mass="16571">MKVLVILGLVLLSVMVQGKVFERCELARTLKRLGMDGYRGISLANWMCLAKWESDYNTRATNYNPGDQSTDYGIFQINSHYWCNNGRTPGAVNACHISCNALLQDDITQAVACAKRVVRDPQGIRAWVAWKAHCQNRDVSQYVQGCGV</sequence>
<keyword id="KW-0929">Antimicrobial</keyword>
<keyword id="KW-0081">Bacteriolytic enzyme</keyword>
<keyword id="KW-1015">Disulfide bond</keyword>
<keyword id="KW-0326">Glycosidase</keyword>
<keyword id="KW-0378">Hydrolase</keyword>
<keyword id="KW-0964">Secreted</keyword>
<keyword id="KW-0732">Signal</keyword>
<proteinExistence type="evidence at transcript level"/>
<organism>
    <name type="scientific">Saimiri sciureus</name>
    <name type="common">Common squirrel monkey</name>
    <dbReference type="NCBI Taxonomy" id="9521"/>
    <lineage>
        <taxon>Eukaryota</taxon>
        <taxon>Metazoa</taxon>
        <taxon>Chordata</taxon>
        <taxon>Craniata</taxon>
        <taxon>Vertebrata</taxon>
        <taxon>Euteleostomi</taxon>
        <taxon>Mammalia</taxon>
        <taxon>Eutheria</taxon>
        <taxon>Euarchontoglires</taxon>
        <taxon>Primates</taxon>
        <taxon>Haplorrhini</taxon>
        <taxon>Platyrrhini</taxon>
        <taxon>Cebidae</taxon>
        <taxon>Saimiriinae</taxon>
        <taxon>Saimiri</taxon>
    </lineage>
</organism>
<name>LYSC_SAISC</name>
<feature type="signal peptide" evidence="1">
    <location>
        <begin position="1"/>
        <end position="18"/>
    </location>
</feature>
<feature type="chain" id="PRO_0000018487" description="Lysozyme C">
    <location>
        <begin position="19"/>
        <end position="148"/>
    </location>
</feature>
<feature type="domain" description="C-type lysozyme" evidence="2">
    <location>
        <begin position="19"/>
        <end position="148"/>
    </location>
</feature>
<feature type="active site" evidence="2">
    <location>
        <position position="53"/>
    </location>
</feature>
<feature type="active site" evidence="2">
    <location>
        <position position="71"/>
    </location>
</feature>
<feature type="disulfide bond" evidence="2">
    <location>
        <begin position="24"/>
        <end position="146"/>
    </location>
</feature>
<feature type="disulfide bond" evidence="2">
    <location>
        <begin position="48"/>
        <end position="134"/>
    </location>
</feature>
<feature type="disulfide bond" evidence="2">
    <location>
        <begin position="83"/>
        <end position="99"/>
    </location>
</feature>
<feature type="disulfide bond" evidence="2">
    <location>
        <begin position="95"/>
        <end position="113"/>
    </location>
</feature>
<dbReference type="EC" id="3.2.1.17"/>
<dbReference type="EMBL" id="U76921">
    <property type="protein sequence ID" value="AAB41211.1"/>
    <property type="molecule type" value="mRNA"/>
</dbReference>
<dbReference type="SMR" id="P79294"/>
<dbReference type="CAZy" id="GH22">
    <property type="family name" value="Glycoside Hydrolase Family 22"/>
</dbReference>
<dbReference type="GO" id="GO:0005576">
    <property type="term" value="C:extracellular region"/>
    <property type="evidence" value="ECO:0007669"/>
    <property type="project" value="UniProtKB-SubCell"/>
</dbReference>
<dbReference type="GO" id="GO:0003796">
    <property type="term" value="F:lysozyme activity"/>
    <property type="evidence" value="ECO:0007669"/>
    <property type="project" value="UniProtKB-EC"/>
</dbReference>
<dbReference type="GO" id="GO:0050829">
    <property type="term" value="P:defense response to Gram-negative bacterium"/>
    <property type="evidence" value="ECO:0007669"/>
    <property type="project" value="TreeGrafter"/>
</dbReference>
<dbReference type="GO" id="GO:0050830">
    <property type="term" value="P:defense response to Gram-positive bacterium"/>
    <property type="evidence" value="ECO:0007669"/>
    <property type="project" value="TreeGrafter"/>
</dbReference>
<dbReference type="GO" id="GO:0031640">
    <property type="term" value="P:killing of cells of another organism"/>
    <property type="evidence" value="ECO:0007669"/>
    <property type="project" value="UniProtKB-KW"/>
</dbReference>
<dbReference type="CDD" id="cd16897">
    <property type="entry name" value="LYZ_C"/>
    <property type="match status" value="1"/>
</dbReference>
<dbReference type="FunFam" id="1.10.530.10:FF:000001">
    <property type="entry name" value="Lysozyme C"/>
    <property type="match status" value="1"/>
</dbReference>
<dbReference type="Gene3D" id="1.10.530.10">
    <property type="match status" value="1"/>
</dbReference>
<dbReference type="InterPro" id="IPR001916">
    <property type="entry name" value="Glyco_hydro_22"/>
</dbReference>
<dbReference type="InterPro" id="IPR019799">
    <property type="entry name" value="Glyco_hydro_22_CS"/>
</dbReference>
<dbReference type="InterPro" id="IPR000974">
    <property type="entry name" value="Glyco_hydro_22_lys"/>
</dbReference>
<dbReference type="InterPro" id="IPR023346">
    <property type="entry name" value="Lysozyme-like_dom_sf"/>
</dbReference>
<dbReference type="PANTHER" id="PTHR11407">
    <property type="entry name" value="LYSOZYME C"/>
    <property type="match status" value="1"/>
</dbReference>
<dbReference type="PANTHER" id="PTHR11407:SF28">
    <property type="entry name" value="LYSOZYME C"/>
    <property type="match status" value="1"/>
</dbReference>
<dbReference type="Pfam" id="PF00062">
    <property type="entry name" value="Lys"/>
    <property type="match status" value="1"/>
</dbReference>
<dbReference type="PRINTS" id="PR00137">
    <property type="entry name" value="LYSOZYME"/>
</dbReference>
<dbReference type="PRINTS" id="PR00135">
    <property type="entry name" value="LYZLACT"/>
</dbReference>
<dbReference type="SMART" id="SM00263">
    <property type="entry name" value="LYZ1"/>
    <property type="match status" value="1"/>
</dbReference>
<dbReference type="SUPFAM" id="SSF53955">
    <property type="entry name" value="Lysozyme-like"/>
    <property type="match status" value="1"/>
</dbReference>
<dbReference type="PROSITE" id="PS00128">
    <property type="entry name" value="GLYCOSYL_HYDROL_F22_1"/>
    <property type="match status" value="1"/>
</dbReference>
<dbReference type="PROSITE" id="PS51348">
    <property type="entry name" value="GLYCOSYL_HYDROL_F22_2"/>
    <property type="match status" value="1"/>
</dbReference>
<accession>P79294</accession>
<comment type="function">
    <text>Lysozymes have primarily a bacteriolytic function; those in tissues and body fluids are associated with the monocyte-macrophage system and enhance the activity of immunoagents.</text>
</comment>
<comment type="catalytic activity">
    <reaction>
        <text>Hydrolysis of (1-&gt;4)-beta-linkages between N-acetylmuramic acid and N-acetyl-D-glucosamine residues in a peptidoglycan and between N-acetyl-D-glucosamine residues in chitodextrins.</text>
        <dbReference type="EC" id="3.2.1.17"/>
    </reaction>
</comment>
<comment type="subunit">
    <text>Monomer.</text>
</comment>
<comment type="subcellular location">
    <subcellularLocation>
        <location evidence="1">Secreted</location>
    </subcellularLocation>
</comment>
<comment type="miscellaneous">
    <text>Lysozyme C is capable of both hydrolysis and transglycosylation; it also shows a slight esterase activity. It acts rapidly on both peptide-substituted and unsubstituted peptidoglycan, and slowly on chitin oligosaccharides.</text>
</comment>
<comment type="similarity">
    <text evidence="2">Belongs to the glycosyl hydrolase 22 family.</text>
</comment>
<gene>
    <name type="primary">LYZ</name>
    <name type="synonym">LZM</name>
</gene>